<accession>A0JNC1</accession>
<proteinExistence type="evidence at transcript level"/>
<gene>
    <name type="primary">CDS2</name>
</gene>
<feature type="chain" id="PRO_0000304876" description="Phosphatidate cytidylyltransferase 2">
    <location>
        <begin position="1"/>
        <end position="445"/>
    </location>
</feature>
<feature type="transmembrane region" description="Helical" evidence="4">
    <location>
        <begin position="79"/>
        <end position="99"/>
    </location>
</feature>
<feature type="transmembrane region" description="Helical" evidence="4">
    <location>
        <begin position="132"/>
        <end position="152"/>
    </location>
</feature>
<feature type="transmembrane region" description="Helical" evidence="4">
    <location>
        <begin position="166"/>
        <end position="186"/>
    </location>
</feature>
<feature type="transmembrane region" description="Helical" evidence="4">
    <location>
        <begin position="213"/>
        <end position="233"/>
    </location>
</feature>
<feature type="transmembrane region" description="Helical" evidence="4">
    <location>
        <begin position="262"/>
        <end position="282"/>
    </location>
</feature>
<feature type="transmembrane region" description="Helical" evidence="4">
    <location>
        <begin position="340"/>
        <end position="360"/>
    </location>
</feature>
<feature type="region of interest" description="Disordered" evidence="5">
    <location>
        <begin position="1"/>
        <end position="52"/>
    </location>
</feature>
<feature type="compositionally biased region" description="Basic and acidic residues" evidence="5">
    <location>
        <begin position="1"/>
        <end position="39"/>
    </location>
</feature>
<feature type="modified residue" description="Phosphoserine" evidence="1">
    <location>
        <position position="21"/>
    </location>
</feature>
<feature type="modified residue" description="Phosphothreonine" evidence="1">
    <location>
        <position position="31"/>
    </location>
</feature>
<feature type="modified residue" description="Phosphoserine" evidence="1">
    <location>
        <position position="33"/>
    </location>
</feature>
<feature type="modified residue" description="Phosphoserine" evidence="1">
    <location>
        <position position="35"/>
    </location>
</feature>
<feature type="modified residue" description="Phosphoserine" evidence="1">
    <location>
        <position position="37"/>
    </location>
</feature>
<feature type="modified residue" description="Phosphothreonine" evidence="3">
    <location>
        <position position="51"/>
    </location>
</feature>
<sequence>MTELRQRVAREPEAPPEDKESESEAKADGETASDSESRVEAVTQPPSADDTPEVLNRALSNLSSRWKNWWVRGILTLAMIAFFFIIIYLGPMVLMMIVMCVQIKCFHEIITIGYNVYHSYDLPWFRTLSWYFLLCVNYFFYGETVTDYFFTLVQREEPLRILSKYHRFISFTLYLTGFCMFVLSLVKKHYRLQFYMFGWTHVTLLIVVTQSHLVIHNLFEGMIWFIVPISCVICNDIMAYMFGFFFGRTPLIKLSPKKTWEGFIGGFFATVVFGLLLSYVMSGYRCFVCPVEYNNDTNSFTVDCEPSGLFRLQEYNIPGVIQSIIGWKTVRMYPFQIHSIALSTFASLIGPFGGFFASGFKRAFKIKDFANTIPGHGGIMDRFDCQYLMATFVNVYIASFIRGPNPSKLVQQFLTLRPDQQLHIFNTLKSHLTDKGMLTAATEDK</sequence>
<comment type="function">
    <text evidence="1">Catalyzes the conversion of phosphatidic acid (PA) to CDP-diacylglycerol (CDP-DAG), an essential intermediate in the synthesis of phosphatidylglycerol, cardiolipin and phosphatidylinositol (By similarity). Exhibits specificity for the nature of the acyl chains at the sn-1 and sn-2 positions in the substrate, PA and the preferred acyl chain composition is 1-stearoyl-2-arachidonoyl-sn-phosphatidic acid (By similarity). Plays an important role in regulating the growth and maturation of lipid droplets which are storage organelles at the center of lipid and energy homeostasis (By similarity).</text>
</comment>
<comment type="catalytic activity">
    <reaction evidence="1">
        <text>a 1,2-diacyl-sn-glycero-3-phosphate + CTP + H(+) = a CDP-1,2-diacyl-sn-glycerol + diphosphate</text>
        <dbReference type="Rhea" id="RHEA:16229"/>
        <dbReference type="ChEBI" id="CHEBI:15378"/>
        <dbReference type="ChEBI" id="CHEBI:33019"/>
        <dbReference type="ChEBI" id="CHEBI:37563"/>
        <dbReference type="ChEBI" id="CHEBI:58332"/>
        <dbReference type="ChEBI" id="CHEBI:58608"/>
        <dbReference type="EC" id="2.7.7.41"/>
    </reaction>
    <physiologicalReaction direction="left-to-right" evidence="1">
        <dbReference type="Rhea" id="RHEA:16230"/>
    </physiologicalReaction>
</comment>
<comment type="catalytic activity">
    <reaction evidence="1">
        <text>1-octadecanoyl-2-(5Z,8Z,11Z,14Z-eicosatetraenoyl)-sn-glycero-3-phosphate + CTP + H(+) = 1-octadecanoyl-2-(5Z,8Z,11Z,14Z-eicosatetraenoyl)-sn-glycero-3-cytidine-5'-diphosphate + diphosphate</text>
        <dbReference type="Rhea" id="RHEA:45648"/>
        <dbReference type="ChEBI" id="CHEBI:15378"/>
        <dbReference type="ChEBI" id="CHEBI:33019"/>
        <dbReference type="ChEBI" id="CHEBI:37563"/>
        <dbReference type="ChEBI" id="CHEBI:77091"/>
        <dbReference type="ChEBI" id="CHEBI:85349"/>
    </reaction>
    <physiologicalReaction direction="left-to-right" evidence="1">
        <dbReference type="Rhea" id="RHEA:45649"/>
    </physiologicalReaction>
</comment>
<comment type="catalytic activity">
    <reaction evidence="1">
        <text>1-octadecanoyl-2-(9Z,12Z-octadecadienoyl)-sn-glycero-3-phosphate + CTP + H(+) = 1-octadecanoyl-2-(9Z,12Z-octadecadienoyl)-sn-glycero-3-cytidine-5'-diphosphate + diphosphate</text>
        <dbReference type="Rhea" id="RHEA:45660"/>
        <dbReference type="ChEBI" id="CHEBI:15378"/>
        <dbReference type="ChEBI" id="CHEBI:33019"/>
        <dbReference type="ChEBI" id="CHEBI:37563"/>
        <dbReference type="ChEBI" id="CHEBI:77098"/>
        <dbReference type="ChEBI" id="CHEBI:85352"/>
    </reaction>
    <physiologicalReaction direction="left-to-right" evidence="1">
        <dbReference type="Rhea" id="RHEA:45661"/>
    </physiologicalReaction>
</comment>
<comment type="catalytic activity">
    <reaction evidence="1">
        <text>1-hexadecanoyl-2-(5Z,8Z,11Z,14Z-eicosatetraenoyl)-sn-glycero-3-phosphate + CTP + H(+) = 1-hexadecanoyl-2-(5Z,8Z,11Z,14Z-eicosatetraenoyl)-sn-glycero-3-cytidine-5'-diphosphate + diphosphate</text>
        <dbReference type="Rhea" id="RHEA:45652"/>
        <dbReference type="ChEBI" id="CHEBI:15378"/>
        <dbReference type="ChEBI" id="CHEBI:33019"/>
        <dbReference type="ChEBI" id="CHEBI:37563"/>
        <dbReference type="ChEBI" id="CHEBI:72864"/>
        <dbReference type="ChEBI" id="CHEBI:85350"/>
    </reaction>
    <physiologicalReaction direction="left-to-right" evidence="1">
        <dbReference type="Rhea" id="RHEA:45653"/>
    </physiologicalReaction>
</comment>
<comment type="catalytic activity">
    <reaction evidence="1">
        <text>1,2-di-(5Z,8Z,11Z,14Z)-eicosatetraenoyl-sn-glycero-3-phosphate + CTP + H(+) = 1,2-di-(5Z,8Z,11Z,14Z-eicosatetraenoyl)-sn-glycero-3-cytidine-5'-diphosphate + diphosphate</text>
        <dbReference type="Rhea" id="RHEA:45656"/>
        <dbReference type="ChEBI" id="CHEBI:15378"/>
        <dbReference type="ChEBI" id="CHEBI:33019"/>
        <dbReference type="ChEBI" id="CHEBI:37563"/>
        <dbReference type="ChEBI" id="CHEBI:77126"/>
        <dbReference type="ChEBI" id="CHEBI:85351"/>
    </reaction>
    <physiologicalReaction direction="left-to-right" evidence="1">
        <dbReference type="Rhea" id="RHEA:45657"/>
    </physiologicalReaction>
</comment>
<comment type="catalytic activity">
    <reaction evidence="1">
        <text>1-octadecanoyl-2-(9Z-octadecenoyl)-sn-glycero-3-phosphate + CTP + H(+) = 1-octadecanoyl-2-(9Z-octadecenoyl)-sn-glycero-3-cytidine-5'-diphosphate + diphosphate</text>
        <dbReference type="Rhea" id="RHEA:45664"/>
        <dbReference type="ChEBI" id="CHEBI:15378"/>
        <dbReference type="ChEBI" id="CHEBI:33019"/>
        <dbReference type="ChEBI" id="CHEBI:37563"/>
        <dbReference type="ChEBI" id="CHEBI:74560"/>
        <dbReference type="ChEBI" id="CHEBI:85353"/>
    </reaction>
    <physiologicalReaction direction="left-to-right" evidence="1">
        <dbReference type="Rhea" id="RHEA:45665"/>
    </physiologicalReaction>
</comment>
<comment type="catalytic activity">
    <reaction evidence="1">
        <text>1-octadecanoyl-2-(4Z,7Z,10Z,13Z,16Z,19Z-docosahexaenoyl)-sn-glycero-3-phosphate + CTP + H(+) = 1-octadecanoyl-2-(4Z,7Z,10Z,13Z,16Z,19Z-docosahexaenoyl)-sn-glycero-3-cytidine-5'-diphosphate + diphosphate</text>
        <dbReference type="Rhea" id="RHEA:45668"/>
        <dbReference type="ChEBI" id="CHEBI:15378"/>
        <dbReference type="ChEBI" id="CHEBI:33019"/>
        <dbReference type="ChEBI" id="CHEBI:37563"/>
        <dbReference type="ChEBI" id="CHEBI:77130"/>
        <dbReference type="ChEBI" id="CHEBI:85354"/>
    </reaction>
    <physiologicalReaction direction="left-to-right" evidence="1">
        <dbReference type="Rhea" id="RHEA:45669"/>
    </physiologicalReaction>
</comment>
<comment type="catalytic activity">
    <reaction evidence="1">
        <text>1,2-di-(9Z,12Z-octadecadienoyl)-sn-glycero-3-phosphate + CTP + H(+) = 1,2-di-(9Z,12Z-octadecadienoyl)-sn-glycero-3-cytidine-5'-diphosphate + diphosphate</text>
        <dbReference type="Rhea" id="RHEA:45672"/>
        <dbReference type="ChEBI" id="CHEBI:15378"/>
        <dbReference type="ChEBI" id="CHEBI:33019"/>
        <dbReference type="ChEBI" id="CHEBI:37563"/>
        <dbReference type="ChEBI" id="CHEBI:77128"/>
        <dbReference type="ChEBI" id="CHEBI:85355"/>
    </reaction>
    <physiologicalReaction direction="left-to-right" evidence="1">
        <dbReference type="Rhea" id="RHEA:45673"/>
    </physiologicalReaction>
</comment>
<comment type="catalytic activity">
    <reaction evidence="1">
        <text>1,2-di-(9Z-octadecenoyl)-sn-glycero-3-phosphate + CTP + H(+) = 1,2-di-(9Z-octadecenoyl)-sn-glycero-3-cytidine-5'-diphosphate + diphosphate</text>
        <dbReference type="Rhea" id="RHEA:45676"/>
        <dbReference type="ChEBI" id="CHEBI:15378"/>
        <dbReference type="ChEBI" id="CHEBI:33019"/>
        <dbReference type="ChEBI" id="CHEBI:37563"/>
        <dbReference type="ChEBI" id="CHEBI:74546"/>
        <dbReference type="ChEBI" id="CHEBI:85356"/>
    </reaction>
    <physiologicalReaction direction="left-to-right" evidence="1">
        <dbReference type="Rhea" id="RHEA:45677"/>
    </physiologicalReaction>
</comment>
<comment type="pathway">
    <text>Phospholipid metabolism; CDP-diacylglycerol biosynthesis; CDP-diacylglycerol from sn-glycerol 3-phosphate: step 3/3.</text>
</comment>
<comment type="subunit">
    <text evidence="2">Homodimer.</text>
</comment>
<comment type="subcellular location">
    <subcellularLocation>
        <location evidence="1">Endoplasmic reticulum membrane</location>
        <topology evidence="4">Multi-pass membrane protein</topology>
    </subcellularLocation>
</comment>
<comment type="similarity">
    <text evidence="6">Belongs to the CDS family.</text>
</comment>
<dbReference type="EC" id="2.7.7.41" evidence="1"/>
<dbReference type="EMBL" id="BC126607">
    <property type="protein sequence ID" value="AAI26608.1"/>
    <property type="molecule type" value="mRNA"/>
</dbReference>
<dbReference type="RefSeq" id="NP_001071514.1">
    <property type="nucleotide sequence ID" value="NM_001078046.1"/>
</dbReference>
<dbReference type="FunCoup" id="A0JNC1">
    <property type="interactions" value="3855"/>
</dbReference>
<dbReference type="STRING" id="9913.ENSBTAP00000007970"/>
<dbReference type="PaxDb" id="9913-ENSBTAP00000007970"/>
<dbReference type="Ensembl" id="ENSBTAT00000007970.6">
    <property type="protein sequence ID" value="ENSBTAP00000007970.5"/>
    <property type="gene ID" value="ENSBTAG00000006066.7"/>
</dbReference>
<dbReference type="GeneID" id="614834"/>
<dbReference type="KEGG" id="bta:614834"/>
<dbReference type="CTD" id="8760"/>
<dbReference type="VEuPathDB" id="HostDB:ENSBTAG00000006066"/>
<dbReference type="VGNC" id="VGNC:27156">
    <property type="gene designation" value="CDS2"/>
</dbReference>
<dbReference type="eggNOG" id="KOG1440">
    <property type="taxonomic scope" value="Eukaryota"/>
</dbReference>
<dbReference type="GeneTree" id="ENSGT00940000158877"/>
<dbReference type="HOGENOM" id="CLU_023471_0_1_1"/>
<dbReference type="InParanoid" id="A0JNC1"/>
<dbReference type="OMA" id="FVIESTM"/>
<dbReference type="OrthoDB" id="10260889at2759"/>
<dbReference type="TreeFam" id="TF313464"/>
<dbReference type="Reactome" id="R-BTA-1483148">
    <property type="pathway name" value="Synthesis of PG"/>
</dbReference>
<dbReference type="UniPathway" id="UPA00557">
    <property type="reaction ID" value="UER00614"/>
</dbReference>
<dbReference type="Proteomes" id="UP000009136">
    <property type="component" value="Chromosome 13"/>
</dbReference>
<dbReference type="Bgee" id="ENSBTAG00000006066">
    <property type="expression patterns" value="Expressed in neutrophil and 106 other cell types or tissues"/>
</dbReference>
<dbReference type="GO" id="GO:0005783">
    <property type="term" value="C:endoplasmic reticulum"/>
    <property type="evidence" value="ECO:0000250"/>
    <property type="project" value="UniProtKB"/>
</dbReference>
<dbReference type="GO" id="GO:0005789">
    <property type="term" value="C:endoplasmic reticulum membrane"/>
    <property type="evidence" value="ECO:0000318"/>
    <property type="project" value="GO_Central"/>
</dbReference>
<dbReference type="GO" id="GO:0016020">
    <property type="term" value="C:membrane"/>
    <property type="evidence" value="ECO:0000250"/>
    <property type="project" value="UniProtKB"/>
</dbReference>
<dbReference type="GO" id="GO:0004605">
    <property type="term" value="F:phosphatidate cytidylyltransferase activity"/>
    <property type="evidence" value="ECO:0000250"/>
    <property type="project" value="UniProtKB"/>
</dbReference>
<dbReference type="GO" id="GO:0016024">
    <property type="term" value="P:CDP-diacylglycerol biosynthetic process"/>
    <property type="evidence" value="ECO:0000250"/>
    <property type="project" value="UniProtKB"/>
</dbReference>
<dbReference type="GO" id="GO:0140042">
    <property type="term" value="P:lipid droplet formation"/>
    <property type="evidence" value="ECO:0000250"/>
    <property type="project" value="UniProtKB"/>
</dbReference>
<dbReference type="InterPro" id="IPR000374">
    <property type="entry name" value="PC_trans"/>
</dbReference>
<dbReference type="InterPro" id="IPR016720">
    <property type="entry name" value="PC_Trfase_euk"/>
</dbReference>
<dbReference type="PANTHER" id="PTHR13773">
    <property type="entry name" value="PHOSPHATIDATE CYTIDYLYLTRANSFERASE"/>
    <property type="match status" value="1"/>
</dbReference>
<dbReference type="PANTHER" id="PTHR13773:SF4">
    <property type="entry name" value="PHOSPHATIDATE CYTIDYLYLTRANSFERASE 2"/>
    <property type="match status" value="1"/>
</dbReference>
<dbReference type="Pfam" id="PF01148">
    <property type="entry name" value="CTP_transf_1"/>
    <property type="match status" value="1"/>
</dbReference>
<dbReference type="PIRSF" id="PIRSF018269">
    <property type="entry name" value="PC_trans_euk"/>
    <property type="match status" value="1"/>
</dbReference>
<dbReference type="PROSITE" id="PS01315">
    <property type="entry name" value="CDS"/>
    <property type="match status" value="1"/>
</dbReference>
<evidence type="ECO:0000250" key="1">
    <source>
        <dbReference type="UniProtKB" id="O95674"/>
    </source>
</evidence>
<evidence type="ECO:0000250" key="2">
    <source>
        <dbReference type="UniProtKB" id="Q91XU8"/>
    </source>
</evidence>
<evidence type="ECO:0000250" key="3">
    <source>
        <dbReference type="UniProtKB" id="Q99L43"/>
    </source>
</evidence>
<evidence type="ECO:0000255" key="4"/>
<evidence type="ECO:0000256" key="5">
    <source>
        <dbReference type="SAM" id="MobiDB-lite"/>
    </source>
</evidence>
<evidence type="ECO:0000305" key="6"/>
<protein>
    <recommendedName>
        <fullName evidence="6">Phosphatidate cytidylyltransferase 2</fullName>
        <ecNumber evidence="1">2.7.7.41</ecNumber>
    </recommendedName>
    <alternativeName>
        <fullName>CDP-DAG synthase 2</fullName>
    </alternativeName>
    <alternativeName>
        <fullName>CDP-DG synthase 2</fullName>
    </alternativeName>
    <alternativeName>
        <fullName>CDP-diacylglycerol synthase 2</fullName>
        <shortName>CDS 2</shortName>
    </alternativeName>
    <alternativeName>
        <fullName>CDP-diglyceride pyrophosphorylase 2</fullName>
    </alternativeName>
    <alternativeName>
        <fullName>CDP-diglyceride synthase 2</fullName>
    </alternativeName>
    <alternativeName>
        <fullName>CTP:phosphatidate cytidylyltransferase 2</fullName>
    </alternativeName>
</protein>
<reference key="1">
    <citation type="submission" date="2006-10" db="EMBL/GenBank/DDBJ databases">
        <authorList>
            <consortium name="NIH - Mammalian Gene Collection (MGC) project"/>
        </authorList>
    </citation>
    <scope>NUCLEOTIDE SEQUENCE [LARGE SCALE MRNA]</scope>
    <source>
        <strain>Hereford</strain>
        <tissue>Hippocampus</tissue>
    </source>
</reference>
<organism>
    <name type="scientific">Bos taurus</name>
    <name type="common">Bovine</name>
    <dbReference type="NCBI Taxonomy" id="9913"/>
    <lineage>
        <taxon>Eukaryota</taxon>
        <taxon>Metazoa</taxon>
        <taxon>Chordata</taxon>
        <taxon>Craniata</taxon>
        <taxon>Vertebrata</taxon>
        <taxon>Euteleostomi</taxon>
        <taxon>Mammalia</taxon>
        <taxon>Eutheria</taxon>
        <taxon>Laurasiatheria</taxon>
        <taxon>Artiodactyla</taxon>
        <taxon>Ruminantia</taxon>
        <taxon>Pecora</taxon>
        <taxon>Bovidae</taxon>
        <taxon>Bovinae</taxon>
        <taxon>Bos</taxon>
    </lineage>
</organism>
<keyword id="KW-0256">Endoplasmic reticulum</keyword>
<keyword id="KW-0444">Lipid biosynthesis</keyword>
<keyword id="KW-0443">Lipid metabolism</keyword>
<keyword id="KW-0472">Membrane</keyword>
<keyword id="KW-0548">Nucleotidyltransferase</keyword>
<keyword id="KW-0594">Phospholipid biosynthesis</keyword>
<keyword id="KW-1208">Phospholipid metabolism</keyword>
<keyword id="KW-0597">Phosphoprotein</keyword>
<keyword id="KW-1185">Reference proteome</keyword>
<keyword id="KW-0808">Transferase</keyword>
<keyword id="KW-0812">Transmembrane</keyword>
<keyword id="KW-1133">Transmembrane helix</keyword>
<name>CDS2_BOVIN</name>